<keyword id="KW-0067">ATP-binding</keyword>
<keyword id="KW-0963">Cytoplasm</keyword>
<keyword id="KW-0324">Glycolysis</keyword>
<keyword id="KW-0418">Kinase</keyword>
<keyword id="KW-0547">Nucleotide-binding</keyword>
<keyword id="KW-1185">Reference proteome</keyword>
<keyword id="KW-0808">Transferase</keyword>
<name>PGK_ACTSZ</name>
<proteinExistence type="inferred from homology"/>
<feature type="chain" id="PRO_1000071469" description="Phosphoglycerate kinase">
    <location>
        <begin position="1"/>
        <end position="391"/>
    </location>
</feature>
<feature type="binding site" evidence="1">
    <location>
        <begin position="21"/>
        <end position="23"/>
    </location>
    <ligand>
        <name>substrate</name>
    </ligand>
</feature>
<feature type="binding site" evidence="1">
    <location>
        <position position="36"/>
    </location>
    <ligand>
        <name>substrate</name>
    </ligand>
</feature>
<feature type="binding site" evidence="1">
    <location>
        <begin position="59"/>
        <end position="62"/>
    </location>
    <ligand>
        <name>substrate</name>
    </ligand>
</feature>
<feature type="binding site" evidence="1">
    <location>
        <position position="114"/>
    </location>
    <ligand>
        <name>substrate</name>
    </ligand>
</feature>
<feature type="binding site" evidence="1">
    <location>
        <position position="147"/>
    </location>
    <ligand>
        <name>substrate</name>
    </ligand>
</feature>
<feature type="binding site" evidence="1">
    <location>
        <position position="198"/>
    </location>
    <ligand>
        <name>ATP</name>
        <dbReference type="ChEBI" id="CHEBI:30616"/>
    </ligand>
</feature>
<feature type="binding site" evidence="1">
    <location>
        <position position="315"/>
    </location>
    <ligand>
        <name>ATP</name>
        <dbReference type="ChEBI" id="CHEBI:30616"/>
    </ligand>
</feature>
<feature type="binding site" evidence="1">
    <location>
        <begin position="344"/>
        <end position="347"/>
    </location>
    <ligand>
        <name>ATP</name>
        <dbReference type="ChEBI" id="CHEBI:30616"/>
    </ligand>
</feature>
<gene>
    <name evidence="1" type="primary">pgk</name>
    <name type="ordered locus">Asuc_0535</name>
</gene>
<comment type="catalytic activity">
    <reaction evidence="1">
        <text>(2R)-3-phosphoglycerate + ATP = (2R)-3-phospho-glyceroyl phosphate + ADP</text>
        <dbReference type="Rhea" id="RHEA:14801"/>
        <dbReference type="ChEBI" id="CHEBI:30616"/>
        <dbReference type="ChEBI" id="CHEBI:57604"/>
        <dbReference type="ChEBI" id="CHEBI:58272"/>
        <dbReference type="ChEBI" id="CHEBI:456216"/>
        <dbReference type="EC" id="2.7.2.3"/>
    </reaction>
</comment>
<comment type="pathway">
    <text evidence="1">Carbohydrate degradation; glycolysis; pyruvate from D-glyceraldehyde 3-phosphate: step 2/5.</text>
</comment>
<comment type="subunit">
    <text evidence="1">Monomer.</text>
</comment>
<comment type="subcellular location">
    <subcellularLocation>
        <location evidence="1">Cytoplasm</location>
    </subcellularLocation>
</comment>
<comment type="similarity">
    <text evidence="1">Belongs to the phosphoglycerate kinase family.</text>
</comment>
<accession>A6VLR3</accession>
<evidence type="ECO:0000255" key="1">
    <source>
        <dbReference type="HAMAP-Rule" id="MF_00145"/>
    </source>
</evidence>
<sequence>MSVIKMTDLDLAGKRVFIRADLNVPVKDGKVASDARIRATIPTLKLALEKGAKVMVTSHLGRPTEGEFKPEDSLQPVVDYLNNAELGVPVRLVQNYLDGVDVQAGEIVVLENVRVNKGEKKNDPELGKKYAALCDVFVMDAFGTAHRAQASTYGVAEYAPVACAGPLLAAELDALGKALKEPQRPMLAIVGGSKVSTKLTVLDSLSKIADQLIVGGGIANTFIAAEGHNVGKSLYEEDLIPEAKRLAAATNIPVPVDVRVGTEFSESAPATEKSVTEVRADESIFDIGDKSAEELAKIIKSAKTILWNGPVGVFEFPNFRKGTEVVSNAIAEATANGAFSIAGGGDTLAAIDLFGIKDKISYISTGGGAFLEFVEGKVLPAVEILEKRANG</sequence>
<reference key="1">
    <citation type="journal article" date="2010" name="BMC Genomics">
        <title>A genomic perspective on the potential of Actinobacillus succinogenes for industrial succinate production.</title>
        <authorList>
            <person name="McKinlay J.B."/>
            <person name="Laivenieks M."/>
            <person name="Schindler B.D."/>
            <person name="McKinlay A.A."/>
            <person name="Siddaramappa S."/>
            <person name="Challacombe J.F."/>
            <person name="Lowry S.R."/>
            <person name="Clum A."/>
            <person name="Lapidus A.L."/>
            <person name="Burkhart K.B."/>
            <person name="Harkins V."/>
            <person name="Vieille C."/>
        </authorList>
    </citation>
    <scope>NUCLEOTIDE SEQUENCE [LARGE SCALE GENOMIC DNA]</scope>
    <source>
        <strain>ATCC 55618 / DSM 22257 / CCUG 43843 / 130Z</strain>
    </source>
</reference>
<dbReference type="EC" id="2.7.2.3" evidence="1"/>
<dbReference type="EMBL" id="CP000746">
    <property type="protein sequence ID" value="ABR73910.1"/>
    <property type="molecule type" value="Genomic_DNA"/>
</dbReference>
<dbReference type="RefSeq" id="WP_012072290.1">
    <property type="nucleotide sequence ID" value="NC_009655.1"/>
</dbReference>
<dbReference type="SMR" id="A6VLR3"/>
<dbReference type="STRING" id="339671.Asuc_0535"/>
<dbReference type="KEGG" id="asu:Asuc_0535"/>
<dbReference type="eggNOG" id="COG0126">
    <property type="taxonomic scope" value="Bacteria"/>
</dbReference>
<dbReference type="HOGENOM" id="CLU_025427_0_2_6"/>
<dbReference type="OrthoDB" id="9808460at2"/>
<dbReference type="UniPathway" id="UPA00109">
    <property type="reaction ID" value="UER00185"/>
</dbReference>
<dbReference type="Proteomes" id="UP000001114">
    <property type="component" value="Chromosome"/>
</dbReference>
<dbReference type="GO" id="GO:0005829">
    <property type="term" value="C:cytosol"/>
    <property type="evidence" value="ECO:0007669"/>
    <property type="project" value="TreeGrafter"/>
</dbReference>
<dbReference type="GO" id="GO:0043531">
    <property type="term" value="F:ADP binding"/>
    <property type="evidence" value="ECO:0007669"/>
    <property type="project" value="TreeGrafter"/>
</dbReference>
<dbReference type="GO" id="GO:0005524">
    <property type="term" value="F:ATP binding"/>
    <property type="evidence" value="ECO:0007669"/>
    <property type="project" value="UniProtKB-KW"/>
</dbReference>
<dbReference type="GO" id="GO:0004618">
    <property type="term" value="F:phosphoglycerate kinase activity"/>
    <property type="evidence" value="ECO:0007669"/>
    <property type="project" value="UniProtKB-UniRule"/>
</dbReference>
<dbReference type="GO" id="GO:0006094">
    <property type="term" value="P:gluconeogenesis"/>
    <property type="evidence" value="ECO:0007669"/>
    <property type="project" value="TreeGrafter"/>
</dbReference>
<dbReference type="GO" id="GO:0006096">
    <property type="term" value="P:glycolytic process"/>
    <property type="evidence" value="ECO:0007669"/>
    <property type="project" value="UniProtKB-UniRule"/>
</dbReference>
<dbReference type="FunFam" id="3.40.50.1260:FF:000001">
    <property type="entry name" value="Phosphoglycerate kinase"/>
    <property type="match status" value="1"/>
</dbReference>
<dbReference type="FunFam" id="3.40.50.1260:FF:000002">
    <property type="entry name" value="Phosphoglycerate kinase"/>
    <property type="match status" value="1"/>
</dbReference>
<dbReference type="Gene3D" id="3.40.50.1260">
    <property type="entry name" value="Phosphoglycerate kinase, N-terminal domain"/>
    <property type="match status" value="2"/>
</dbReference>
<dbReference type="HAMAP" id="MF_00145">
    <property type="entry name" value="Phosphoglyc_kinase"/>
    <property type="match status" value="1"/>
</dbReference>
<dbReference type="InterPro" id="IPR001576">
    <property type="entry name" value="Phosphoglycerate_kinase"/>
</dbReference>
<dbReference type="InterPro" id="IPR015911">
    <property type="entry name" value="Phosphoglycerate_kinase_CS"/>
</dbReference>
<dbReference type="InterPro" id="IPR015824">
    <property type="entry name" value="Phosphoglycerate_kinase_N"/>
</dbReference>
<dbReference type="InterPro" id="IPR036043">
    <property type="entry name" value="Phosphoglycerate_kinase_sf"/>
</dbReference>
<dbReference type="PANTHER" id="PTHR11406">
    <property type="entry name" value="PHOSPHOGLYCERATE KINASE"/>
    <property type="match status" value="1"/>
</dbReference>
<dbReference type="PANTHER" id="PTHR11406:SF23">
    <property type="entry name" value="PHOSPHOGLYCERATE KINASE 1, CHLOROPLASTIC-RELATED"/>
    <property type="match status" value="1"/>
</dbReference>
<dbReference type="Pfam" id="PF00162">
    <property type="entry name" value="PGK"/>
    <property type="match status" value="1"/>
</dbReference>
<dbReference type="PIRSF" id="PIRSF000724">
    <property type="entry name" value="Pgk"/>
    <property type="match status" value="1"/>
</dbReference>
<dbReference type="PRINTS" id="PR00477">
    <property type="entry name" value="PHGLYCKINASE"/>
</dbReference>
<dbReference type="SUPFAM" id="SSF53748">
    <property type="entry name" value="Phosphoglycerate kinase"/>
    <property type="match status" value="1"/>
</dbReference>
<dbReference type="PROSITE" id="PS00111">
    <property type="entry name" value="PGLYCERATE_KINASE"/>
    <property type="match status" value="1"/>
</dbReference>
<organism>
    <name type="scientific">Actinobacillus succinogenes (strain ATCC 55618 / DSM 22257 / CCUG 43843 / 130Z)</name>
    <dbReference type="NCBI Taxonomy" id="339671"/>
    <lineage>
        <taxon>Bacteria</taxon>
        <taxon>Pseudomonadati</taxon>
        <taxon>Pseudomonadota</taxon>
        <taxon>Gammaproteobacteria</taxon>
        <taxon>Pasteurellales</taxon>
        <taxon>Pasteurellaceae</taxon>
        <taxon>Actinobacillus</taxon>
    </lineage>
</organism>
<protein>
    <recommendedName>
        <fullName evidence="1">Phosphoglycerate kinase</fullName>
        <ecNumber evidence="1">2.7.2.3</ecNumber>
    </recommendedName>
</protein>